<name>MED31_ASPFU</name>
<feature type="chain" id="PRO_0000305716" description="Mediator of RNA polymerase II transcription subunit 31">
    <location>
        <begin position="1"/>
        <end position="162"/>
    </location>
</feature>
<feature type="region of interest" description="Disordered" evidence="2">
    <location>
        <begin position="131"/>
        <end position="162"/>
    </location>
</feature>
<feature type="compositionally biased region" description="Basic and acidic residues" evidence="2">
    <location>
        <begin position="141"/>
        <end position="162"/>
    </location>
</feature>
<proteinExistence type="inferred from homology"/>
<accession>Q4WYS1</accession>
<gene>
    <name type="primary">soh1</name>
    <name type="synonym">med31</name>
    <name type="ORF">AFUA_3G14040</name>
</gene>
<sequence>MDQQPPVQPQQRPPPSLTNPRFTLELEFVSSLANPYYLSHLAVTYPNLLGISKSSDDSNTSTEGPDPEAQAFAAYLAYLYSYWKTPEYAQFLTHPGATLRALRLLQEESFRRDIIRPQVIEALAGNGLENVQGGQNVEAGDTGHNEGDQGTQQDKENIALKT</sequence>
<keyword id="KW-0010">Activator</keyword>
<keyword id="KW-0539">Nucleus</keyword>
<keyword id="KW-1185">Reference proteome</keyword>
<keyword id="KW-0804">Transcription</keyword>
<keyword id="KW-0805">Transcription regulation</keyword>
<organism>
    <name type="scientific">Aspergillus fumigatus (strain ATCC MYA-4609 / CBS 101355 / FGSC A1100 / Af293)</name>
    <name type="common">Neosartorya fumigata</name>
    <dbReference type="NCBI Taxonomy" id="330879"/>
    <lineage>
        <taxon>Eukaryota</taxon>
        <taxon>Fungi</taxon>
        <taxon>Dikarya</taxon>
        <taxon>Ascomycota</taxon>
        <taxon>Pezizomycotina</taxon>
        <taxon>Eurotiomycetes</taxon>
        <taxon>Eurotiomycetidae</taxon>
        <taxon>Eurotiales</taxon>
        <taxon>Aspergillaceae</taxon>
        <taxon>Aspergillus</taxon>
        <taxon>Aspergillus subgen. Fumigati</taxon>
    </lineage>
</organism>
<evidence type="ECO:0000250" key="1"/>
<evidence type="ECO:0000256" key="2">
    <source>
        <dbReference type="SAM" id="MobiDB-lite"/>
    </source>
</evidence>
<evidence type="ECO:0000305" key="3"/>
<comment type="function">
    <text evidence="1">Component of the Mediator complex, a coactivator involved in the regulated transcription of nearly all RNA polymerase II-dependent genes. Mediator functions as a bridge to convey information from gene-specific regulatory proteins to the basal RNA polymerase II transcription machinery. Mediator is recruited to promoters by direct interactions with regulatory proteins and serves as a scaffold for the assembly of a functional preinitiation complex with RNA polymerase II and the general transcription factors (By similarity).</text>
</comment>
<comment type="subunit">
    <text evidence="1">Component of the Mediator complex.</text>
</comment>
<comment type="subcellular location">
    <subcellularLocation>
        <location evidence="1">Nucleus</location>
    </subcellularLocation>
</comment>
<comment type="similarity">
    <text evidence="3">Belongs to the Mediator complex subunit 31 family.</text>
</comment>
<protein>
    <recommendedName>
        <fullName>Mediator of RNA polymerase II transcription subunit 31</fullName>
    </recommendedName>
    <alternativeName>
        <fullName>Mediator complex subunit 31</fullName>
    </alternativeName>
</protein>
<reference key="1">
    <citation type="journal article" date="2005" name="Nature">
        <title>Genomic sequence of the pathogenic and allergenic filamentous fungus Aspergillus fumigatus.</title>
        <authorList>
            <person name="Nierman W.C."/>
            <person name="Pain A."/>
            <person name="Anderson M.J."/>
            <person name="Wortman J.R."/>
            <person name="Kim H.S."/>
            <person name="Arroyo J."/>
            <person name="Berriman M."/>
            <person name="Abe K."/>
            <person name="Archer D.B."/>
            <person name="Bermejo C."/>
            <person name="Bennett J.W."/>
            <person name="Bowyer P."/>
            <person name="Chen D."/>
            <person name="Collins M."/>
            <person name="Coulsen R."/>
            <person name="Davies R."/>
            <person name="Dyer P.S."/>
            <person name="Farman M.L."/>
            <person name="Fedorova N."/>
            <person name="Fedorova N.D."/>
            <person name="Feldblyum T.V."/>
            <person name="Fischer R."/>
            <person name="Fosker N."/>
            <person name="Fraser A."/>
            <person name="Garcia J.L."/>
            <person name="Garcia M.J."/>
            <person name="Goble A."/>
            <person name="Goldman G.H."/>
            <person name="Gomi K."/>
            <person name="Griffith-Jones S."/>
            <person name="Gwilliam R."/>
            <person name="Haas B.J."/>
            <person name="Haas H."/>
            <person name="Harris D.E."/>
            <person name="Horiuchi H."/>
            <person name="Huang J."/>
            <person name="Humphray S."/>
            <person name="Jimenez J."/>
            <person name="Keller N."/>
            <person name="Khouri H."/>
            <person name="Kitamoto K."/>
            <person name="Kobayashi T."/>
            <person name="Konzack S."/>
            <person name="Kulkarni R."/>
            <person name="Kumagai T."/>
            <person name="Lafton A."/>
            <person name="Latge J.-P."/>
            <person name="Li W."/>
            <person name="Lord A."/>
            <person name="Lu C."/>
            <person name="Majoros W.H."/>
            <person name="May G.S."/>
            <person name="Miller B.L."/>
            <person name="Mohamoud Y."/>
            <person name="Molina M."/>
            <person name="Monod M."/>
            <person name="Mouyna I."/>
            <person name="Mulligan S."/>
            <person name="Murphy L.D."/>
            <person name="O'Neil S."/>
            <person name="Paulsen I."/>
            <person name="Penalva M.A."/>
            <person name="Pertea M."/>
            <person name="Price C."/>
            <person name="Pritchard B.L."/>
            <person name="Quail M.A."/>
            <person name="Rabbinowitsch E."/>
            <person name="Rawlins N."/>
            <person name="Rajandream M.A."/>
            <person name="Reichard U."/>
            <person name="Renauld H."/>
            <person name="Robson G.D."/>
            <person name="Rodriguez de Cordoba S."/>
            <person name="Rodriguez-Pena J.M."/>
            <person name="Ronning C.M."/>
            <person name="Rutter S."/>
            <person name="Salzberg S.L."/>
            <person name="Sanchez M."/>
            <person name="Sanchez-Ferrero J.C."/>
            <person name="Saunders D."/>
            <person name="Seeger K."/>
            <person name="Squares R."/>
            <person name="Squares S."/>
            <person name="Takeuchi M."/>
            <person name="Tekaia F."/>
            <person name="Turner G."/>
            <person name="Vazquez de Aldana C.R."/>
            <person name="Weidman J."/>
            <person name="White O."/>
            <person name="Woodward J.R."/>
            <person name="Yu J.-H."/>
            <person name="Fraser C.M."/>
            <person name="Galagan J.E."/>
            <person name="Asai K."/>
            <person name="Machida M."/>
            <person name="Hall N."/>
            <person name="Barrell B.G."/>
            <person name="Denning D.W."/>
        </authorList>
    </citation>
    <scope>NUCLEOTIDE SEQUENCE [LARGE SCALE GENOMIC DNA]</scope>
    <source>
        <strain>ATCC MYA-4609 / CBS 101355 / FGSC A1100 / Af293</strain>
    </source>
</reference>
<dbReference type="EMBL" id="AAHF01000002">
    <property type="protein sequence ID" value="EAL92182.1"/>
    <property type="molecule type" value="Genomic_DNA"/>
</dbReference>
<dbReference type="RefSeq" id="XP_754220.1">
    <property type="nucleotide sequence ID" value="XM_749127.1"/>
</dbReference>
<dbReference type="SMR" id="Q4WYS1"/>
<dbReference type="STRING" id="330879.Q4WYS1"/>
<dbReference type="EnsemblFungi" id="EAL92182">
    <property type="protein sequence ID" value="EAL92182"/>
    <property type="gene ID" value="AFUA_3G14040"/>
</dbReference>
<dbReference type="GeneID" id="3511818"/>
<dbReference type="KEGG" id="afm:AFUA_3G14040"/>
<dbReference type="VEuPathDB" id="FungiDB:Afu3g14040"/>
<dbReference type="eggNOG" id="KOG4086">
    <property type="taxonomic scope" value="Eukaryota"/>
</dbReference>
<dbReference type="HOGENOM" id="CLU_071681_1_0_1"/>
<dbReference type="InParanoid" id="Q4WYS1"/>
<dbReference type="OMA" id="NPHYISH"/>
<dbReference type="OrthoDB" id="10257739at2759"/>
<dbReference type="Proteomes" id="UP000002530">
    <property type="component" value="Chromosome 3"/>
</dbReference>
<dbReference type="GO" id="GO:0070847">
    <property type="term" value="C:core mediator complex"/>
    <property type="evidence" value="ECO:0000318"/>
    <property type="project" value="GO_Central"/>
</dbReference>
<dbReference type="GO" id="GO:0016592">
    <property type="term" value="C:mediator complex"/>
    <property type="evidence" value="ECO:0000318"/>
    <property type="project" value="GO_Central"/>
</dbReference>
<dbReference type="GO" id="GO:0003712">
    <property type="term" value="F:transcription coregulator activity"/>
    <property type="evidence" value="ECO:0007669"/>
    <property type="project" value="InterPro"/>
</dbReference>
<dbReference type="GO" id="GO:0006357">
    <property type="term" value="P:regulation of transcription by RNA polymerase II"/>
    <property type="evidence" value="ECO:0000318"/>
    <property type="project" value="GO_Central"/>
</dbReference>
<dbReference type="FunFam" id="1.10.10.1340:FF:000002">
    <property type="entry name" value="Mediator of RNA polymerase II transcription subunit 31"/>
    <property type="match status" value="1"/>
</dbReference>
<dbReference type="Gene3D" id="1.10.10.1340">
    <property type="entry name" value="Mediator of RNA polymerase II, submodule Med31 (Soh1)"/>
    <property type="match status" value="1"/>
</dbReference>
<dbReference type="InterPro" id="IPR038089">
    <property type="entry name" value="Med31_sf"/>
</dbReference>
<dbReference type="InterPro" id="IPR008831">
    <property type="entry name" value="Mediator_Med31"/>
</dbReference>
<dbReference type="PANTHER" id="PTHR13186">
    <property type="entry name" value="MEDIATOR OF RNA POLYMERASE II TRANSCRIPTION SUBUNIT 31"/>
    <property type="match status" value="1"/>
</dbReference>
<dbReference type="Pfam" id="PF05669">
    <property type="entry name" value="Med31"/>
    <property type="match status" value="1"/>
</dbReference>